<keyword id="KW-0687">Ribonucleoprotein</keyword>
<keyword id="KW-0689">Ribosomal protein</keyword>
<keyword id="KW-0694">RNA-binding</keyword>
<keyword id="KW-0699">rRNA-binding</keyword>
<organism>
    <name type="scientific">Onion yellows phytoplasma (strain OY-M)</name>
    <dbReference type="NCBI Taxonomy" id="262768"/>
    <lineage>
        <taxon>Bacteria</taxon>
        <taxon>Bacillati</taxon>
        <taxon>Mycoplasmatota</taxon>
        <taxon>Mollicutes</taxon>
        <taxon>Acholeplasmatales</taxon>
        <taxon>Acholeplasmataceae</taxon>
        <taxon>Candidatus Phytoplasma</taxon>
        <taxon>16SrI (Aster yellows group)</taxon>
    </lineage>
</organism>
<evidence type="ECO:0000255" key="1">
    <source>
        <dbReference type="HAMAP-Rule" id="MF_01309"/>
    </source>
</evidence>
<evidence type="ECO:0000256" key="2">
    <source>
        <dbReference type="SAM" id="MobiDB-lite"/>
    </source>
</evidence>
<evidence type="ECO:0000305" key="3"/>
<proteinExistence type="inferred from homology"/>
<dbReference type="EMBL" id="AP006628">
    <property type="protein sequence ID" value="BAD04291.1"/>
    <property type="molecule type" value="Genomic_DNA"/>
</dbReference>
<dbReference type="SMR" id="Q6YR15"/>
<dbReference type="STRING" id="262768.PAM_206"/>
<dbReference type="KEGG" id="poy:PAM_206"/>
<dbReference type="eggNOG" id="COG0092">
    <property type="taxonomic scope" value="Bacteria"/>
</dbReference>
<dbReference type="HOGENOM" id="CLU_058591_0_2_14"/>
<dbReference type="BioCyc" id="OYEL262768:G1G26-252-MONOMER"/>
<dbReference type="Proteomes" id="UP000002523">
    <property type="component" value="Chromosome"/>
</dbReference>
<dbReference type="GO" id="GO:0022627">
    <property type="term" value="C:cytosolic small ribosomal subunit"/>
    <property type="evidence" value="ECO:0007669"/>
    <property type="project" value="TreeGrafter"/>
</dbReference>
<dbReference type="GO" id="GO:0003729">
    <property type="term" value="F:mRNA binding"/>
    <property type="evidence" value="ECO:0007669"/>
    <property type="project" value="UniProtKB-UniRule"/>
</dbReference>
<dbReference type="GO" id="GO:0019843">
    <property type="term" value="F:rRNA binding"/>
    <property type="evidence" value="ECO:0007669"/>
    <property type="project" value="UniProtKB-UniRule"/>
</dbReference>
<dbReference type="GO" id="GO:0003735">
    <property type="term" value="F:structural constituent of ribosome"/>
    <property type="evidence" value="ECO:0007669"/>
    <property type="project" value="InterPro"/>
</dbReference>
<dbReference type="GO" id="GO:0006412">
    <property type="term" value="P:translation"/>
    <property type="evidence" value="ECO:0007669"/>
    <property type="project" value="UniProtKB-UniRule"/>
</dbReference>
<dbReference type="CDD" id="cd02412">
    <property type="entry name" value="KH-II_30S_S3"/>
    <property type="match status" value="1"/>
</dbReference>
<dbReference type="FunFam" id="3.30.300.20:FF:000001">
    <property type="entry name" value="30S ribosomal protein S3"/>
    <property type="match status" value="1"/>
</dbReference>
<dbReference type="Gene3D" id="3.30.300.20">
    <property type="match status" value="1"/>
</dbReference>
<dbReference type="Gene3D" id="3.30.1140.32">
    <property type="entry name" value="Ribosomal protein S3, C-terminal domain"/>
    <property type="match status" value="1"/>
</dbReference>
<dbReference type="HAMAP" id="MF_01309_B">
    <property type="entry name" value="Ribosomal_uS3_B"/>
    <property type="match status" value="1"/>
</dbReference>
<dbReference type="InterPro" id="IPR004087">
    <property type="entry name" value="KH_dom"/>
</dbReference>
<dbReference type="InterPro" id="IPR015946">
    <property type="entry name" value="KH_dom-like_a/b"/>
</dbReference>
<dbReference type="InterPro" id="IPR004044">
    <property type="entry name" value="KH_dom_type_2"/>
</dbReference>
<dbReference type="InterPro" id="IPR009019">
    <property type="entry name" value="KH_sf_prok-type"/>
</dbReference>
<dbReference type="InterPro" id="IPR036419">
    <property type="entry name" value="Ribosomal_S3_C_sf"/>
</dbReference>
<dbReference type="InterPro" id="IPR005704">
    <property type="entry name" value="Ribosomal_uS3_bac-typ"/>
</dbReference>
<dbReference type="InterPro" id="IPR001351">
    <property type="entry name" value="Ribosomal_uS3_C"/>
</dbReference>
<dbReference type="InterPro" id="IPR018280">
    <property type="entry name" value="Ribosomal_uS3_CS"/>
</dbReference>
<dbReference type="NCBIfam" id="TIGR01009">
    <property type="entry name" value="rpsC_bact"/>
    <property type="match status" value="1"/>
</dbReference>
<dbReference type="PANTHER" id="PTHR11760">
    <property type="entry name" value="30S/40S RIBOSOMAL PROTEIN S3"/>
    <property type="match status" value="1"/>
</dbReference>
<dbReference type="PANTHER" id="PTHR11760:SF19">
    <property type="entry name" value="SMALL RIBOSOMAL SUBUNIT PROTEIN US3C"/>
    <property type="match status" value="1"/>
</dbReference>
<dbReference type="Pfam" id="PF07650">
    <property type="entry name" value="KH_2"/>
    <property type="match status" value="1"/>
</dbReference>
<dbReference type="Pfam" id="PF00189">
    <property type="entry name" value="Ribosomal_S3_C"/>
    <property type="match status" value="1"/>
</dbReference>
<dbReference type="SMART" id="SM00322">
    <property type="entry name" value="KH"/>
    <property type="match status" value="1"/>
</dbReference>
<dbReference type="SUPFAM" id="SSF54814">
    <property type="entry name" value="Prokaryotic type KH domain (KH-domain type II)"/>
    <property type="match status" value="1"/>
</dbReference>
<dbReference type="SUPFAM" id="SSF54821">
    <property type="entry name" value="Ribosomal protein S3 C-terminal domain"/>
    <property type="match status" value="1"/>
</dbReference>
<dbReference type="PROSITE" id="PS50823">
    <property type="entry name" value="KH_TYPE_2"/>
    <property type="match status" value="1"/>
</dbReference>
<dbReference type="PROSITE" id="PS00548">
    <property type="entry name" value="RIBOSOMAL_S3"/>
    <property type="match status" value="1"/>
</dbReference>
<protein>
    <recommendedName>
        <fullName evidence="1">Small ribosomal subunit protein uS3</fullName>
    </recommendedName>
    <alternativeName>
        <fullName evidence="3">30S ribosomal protein S3</fullName>
    </alternativeName>
</protein>
<comment type="function">
    <text evidence="1">Binds the lower part of the 30S subunit head. Binds mRNA in the 70S ribosome, positioning it for translation.</text>
</comment>
<comment type="subunit">
    <text evidence="1">Part of the 30S ribosomal subunit. Forms a tight complex with proteins S10 and S14.</text>
</comment>
<comment type="similarity">
    <text evidence="1">Belongs to the universal ribosomal protein uS3 family.</text>
</comment>
<accession>Q6YR15</accession>
<feature type="chain" id="PRO_0000130165" description="Small ribosomal subunit protein uS3">
    <location>
        <begin position="1"/>
        <end position="252"/>
    </location>
</feature>
<feature type="domain" description="KH type-2" evidence="1">
    <location>
        <begin position="39"/>
        <end position="111"/>
    </location>
</feature>
<feature type="region of interest" description="Disordered" evidence="2">
    <location>
        <begin position="222"/>
        <end position="252"/>
    </location>
</feature>
<feature type="compositionally biased region" description="Polar residues" evidence="2">
    <location>
        <begin position="241"/>
        <end position="252"/>
    </location>
</feature>
<gene>
    <name evidence="1" type="primary">rpsC</name>
    <name type="ordered locus">PAM_206</name>
</gene>
<name>RS3_ONYPE</name>
<reference key="1">
    <citation type="journal article" date="2004" name="Nat. Genet.">
        <title>Reductive evolution suggested from the complete genome sequence of a plant-pathogenic phytoplasma.</title>
        <authorList>
            <person name="Oshima K."/>
            <person name="Kakizawa S."/>
            <person name="Nishigawa H."/>
            <person name="Jung H.-Y."/>
            <person name="Wei W."/>
            <person name="Suzuki S."/>
            <person name="Arashida R."/>
            <person name="Nakata D."/>
            <person name="Miyata S."/>
            <person name="Ugaki M."/>
            <person name="Namba S."/>
        </authorList>
    </citation>
    <scope>NUCLEOTIDE SEQUENCE [LARGE SCALE GENOMIC DNA]</scope>
    <source>
        <strain>OY-M</strain>
    </source>
</reference>
<sequence>MGQKTNPNGLRLGIIRTWESQWCVNDKEIPNLIKEDFLIRKLINNFTKKSAISQIDIERLKEKNKNRITISVHTAKPGVIIGKDGDTRNKLVAKLKELTQKDVNLNVLEVKNSDKIALLIAQNMAEQLENRMFFRRVQKMAIQKALKAGAKGVKTLISGRLGGAEIARSEGHAEGRVPLHTLRADIDYAAVEAHTTYGVLGIKVWIFHGEVLPGQTILDTRKPFASQSSNTPNRRPRNFKGGNNNHVNAKKN</sequence>